<evidence type="ECO:0000255" key="1"/>
<evidence type="ECO:0000269" key="2">
    <source>
    </source>
</evidence>
<evidence type="ECO:0000303" key="3">
    <source>
    </source>
</evidence>
<evidence type="ECO:0000305" key="4"/>
<evidence type="ECO:0000312" key="5">
    <source>
        <dbReference type="Araport" id="AT3G53770"/>
    </source>
</evidence>
<evidence type="ECO:0000312" key="6">
    <source>
        <dbReference type="EMBL" id="CAB88339.1"/>
    </source>
</evidence>
<dbReference type="EMBL" id="AL132960">
    <property type="protein sequence ID" value="CAB88339.1"/>
    <property type="molecule type" value="Genomic_DNA"/>
</dbReference>
<dbReference type="EMBL" id="CP002686">
    <property type="protein sequence ID" value="AEE79140.1"/>
    <property type="molecule type" value="Genomic_DNA"/>
</dbReference>
<dbReference type="EMBL" id="CP002686">
    <property type="protein sequence ID" value="AEE79141.1"/>
    <property type="molecule type" value="Genomic_DNA"/>
</dbReference>
<dbReference type="EMBL" id="DQ056621">
    <property type="protein sequence ID" value="AAY78769.1"/>
    <property type="molecule type" value="mRNA"/>
</dbReference>
<dbReference type="PIR" id="T45917">
    <property type="entry name" value="T45917"/>
</dbReference>
<dbReference type="RefSeq" id="NP_001190082.1">
    <molecule id="Q9M349-2"/>
    <property type="nucleotide sequence ID" value="NM_001203153.1"/>
</dbReference>
<dbReference type="RefSeq" id="NP_190945.1">
    <molecule id="Q9M349-1"/>
    <property type="nucleotide sequence ID" value="NM_115237.1"/>
</dbReference>
<dbReference type="STRING" id="3702.Q9M349"/>
<dbReference type="PaxDb" id="3702-AT3G53770.1"/>
<dbReference type="EnsemblPlants" id="AT3G53770.1">
    <molecule id="Q9M349-1"/>
    <property type="protein sequence ID" value="AT3G53770.1"/>
    <property type="gene ID" value="AT3G53770"/>
</dbReference>
<dbReference type="EnsemblPlants" id="AT3G53770.2">
    <molecule id="Q9M349-2"/>
    <property type="protein sequence ID" value="AT3G53770.2"/>
    <property type="gene ID" value="AT3G53770"/>
</dbReference>
<dbReference type="GeneID" id="824544"/>
<dbReference type="Gramene" id="AT3G53770.1">
    <molecule id="Q9M349-1"/>
    <property type="protein sequence ID" value="AT3G53770.1"/>
    <property type="gene ID" value="AT3G53770"/>
</dbReference>
<dbReference type="Gramene" id="AT3G53770.2">
    <molecule id="Q9M349-2"/>
    <property type="protein sequence ID" value="AT3G53770.2"/>
    <property type="gene ID" value="AT3G53770"/>
</dbReference>
<dbReference type="KEGG" id="ath:AT3G53770"/>
<dbReference type="Araport" id="AT3G53770"/>
<dbReference type="TAIR" id="AT3G53770"/>
<dbReference type="HOGENOM" id="CLU_2076383_0_0_1"/>
<dbReference type="InParanoid" id="Q9M349"/>
<dbReference type="OMA" id="YAIGNSR"/>
<dbReference type="PhylomeDB" id="Q9M349"/>
<dbReference type="PRO" id="PR:Q9M349"/>
<dbReference type="Proteomes" id="UP000006548">
    <property type="component" value="Chromosome 3"/>
</dbReference>
<dbReference type="ExpressionAtlas" id="Q9M349">
    <property type="expression patterns" value="baseline and differential"/>
</dbReference>
<dbReference type="GO" id="GO:0005739">
    <property type="term" value="C:mitochondrion"/>
    <property type="evidence" value="ECO:0007005"/>
    <property type="project" value="TAIR"/>
</dbReference>
<dbReference type="InterPro" id="IPR004926">
    <property type="entry name" value="LEA_3a"/>
</dbReference>
<dbReference type="PANTHER" id="PTHR33509:SF22">
    <property type="entry name" value="LATE EMBRYOGENESIS ABUNDANT PROTEIN 37"/>
    <property type="match status" value="1"/>
</dbReference>
<dbReference type="PANTHER" id="PTHR33509">
    <property type="entry name" value="LATE EMBRYOGENIS ABUNDANT PROTEIN 2-RELATED"/>
    <property type="match status" value="1"/>
</dbReference>
<dbReference type="Pfam" id="PF03242">
    <property type="entry name" value="LEA_3a"/>
    <property type="match status" value="2"/>
</dbReference>
<organism>
    <name type="scientific">Arabidopsis thaliana</name>
    <name type="common">Mouse-ear cress</name>
    <dbReference type="NCBI Taxonomy" id="3702"/>
    <lineage>
        <taxon>Eukaryota</taxon>
        <taxon>Viridiplantae</taxon>
        <taxon>Streptophyta</taxon>
        <taxon>Embryophyta</taxon>
        <taxon>Tracheophyta</taxon>
        <taxon>Spermatophyta</taxon>
        <taxon>Magnoliopsida</taxon>
        <taxon>eudicotyledons</taxon>
        <taxon>Gunneridae</taxon>
        <taxon>Pentapetalae</taxon>
        <taxon>rosids</taxon>
        <taxon>malvids</taxon>
        <taxon>Brassicales</taxon>
        <taxon>Brassicaceae</taxon>
        <taxon>Camelineae</taxon>
        <taxon>Arabidopsis</taxon>
    </lineage>
</organism>
<reference key="1">
    <citation type="journal article" date="2000" name="Nature">
        <title>Sequence and analysis of chromosome 3 of the plant Arabidopsis thaliana.</title>
        <authorList>
            <person name="Salanoubat M."/>
            <person name="Lemcke K."/>
            <person name="Rieger M."/>
            <person name="Ansorge W."/>
            <person name="Unseld M."/>
            <person name="Fartmann B."/>
            <person name="Valle G."/>
            <person name="Bloecker H."/>
            <person name="Perez-Alonso M."/>
            <person name="Obermaier B."/>
            <person name="Delseny M."/>
            <person name="Boutry M."/>
            <person name="Grivell L.A."/>
            <person name="Mache R."/>
            <person name="Puigdomenech P."/>
            <person name="De Simone V."/>
            <person name="Choisne N."/>
            <person name="Artiguenave F."/>
            <person name="Robert C."/>
            <person name="Brottier P."/>
            <person name="Wincker P."/>
            <person name="Cattolico L."/>
            <person name="Weissenbach J."/>
            <person name="Saurin W."/>
            <person name="Quetier F."/>
            <person name="Schaefer M."/>
            <person name="Mueller-Auer S."/>
            <person name="Gabel C."/>
            <person name="Fuchs M."/>
            <person name="Benes V."/>
            <person name="Wurmbach E."/>
            <person name="Drzonek H."/>
            <person name="Erfle H."/>
            <person name="Jordan N."/>
            <person name="Bangert S."/>
            <person name="Wiedelmann R."/>
            <person name="Kranz H."/>
            <person name="Voss H."/>
            <person name="Holland R."/>
            <person name="Brandt P."/>
            <person name="Nyakatura G."/>
            <person name="Vezzi A."/>
            <person name="D'Angelo M."/>
            <person name="Pallavicini A."/>
            <person name="Toppo S."/>
            <person name="Simionati B."/>
            <person name="Conrad A."/>
            <person name="Hornischer K."/>
            <person name="Kauer G."/>
            <person name="Loehnert T.-H."/>
            <person name="Nordsiek G."/>
            <person name="Reichelt J."/>
            <person name="Scharfe M."/>
            <person name="Schoen O."/>
            <person name="Bargues M."/>
            <person name="Terol J."/>
            <person name="Climent J."/>
            <person name="Navarro P."/>
            <person name="Collado C."/>
            <person name="Perez-Perez A."/>
            <person name="Ottenwaelder B."/>
            <person name="Duchemin D."/>
            <person name="Cooke R."/>
            <person name="Laudie M."/>
            <person name="Berger-Llauro C."/>
            <person name="Purnelle B."/>
            <person name="Masuy D."/>
            <person name="de Haan M."/>
            <person name="Maarse A.C."/>
            <person name="Alcaraz J.-P."/>
            <person name="Cottet A."/>
            <person name="Casacuberta E."/>
            <person name="Monfort A."/>
            <person name="Argiriou A."/>
            <person name="Flores M."/>
            <person name="Liguori R."/>
            <person name="Vitale D."/>
            <person name="Mannhaupt G."/>
            <person name="Haase D."/>
            <person name="Schoof H."/>
            <person name="Rudd S."/>
            <person name="Zaccaria P."/>
            <person name="Mewes H.-W."/>
            <person name="Mayer K.F.X."/>
            <person name="Kaul S."/>
            <person name="Town C.D."/>
            <person name="Koo H.L."/>
            <person name="Tallon L.J."/>
            <person name="Jenkins J."/>
            <person name="Rooney T."/>
            <person name="Rizzo M."/>
            <person name="Walts A."/>
            <person name="Utterback T."/>
            <person name="Fujii C.Y."/>
            <person name="Shea T.P."/>
            <person name="Creasy T.H."/>
            <person name="Haas B."/>
            <person name="Maiti R."/>
            <person name="Wu D."/>
            <person name="Peterson J."/>
            <person name="Van Aken S."/>
            <person name="Pai G."/>
            <person name="Militscher J."/>
            <person name="Sellers P."/>
            <person name="Gill J.E."/>
            <person name="Feldblyum T.V."/>
            <person name="Preuss D."/>
            <person name="Lin X."/>
            <person name="Nierman W.C."/>
            <person name="Salzberg S.L."/>
            <person name="White O."/>
            <person name="Venter J.C."/>
            <person name="Fraser C.M."/>
            <person name="Kaneko T."/>
            <person name="Nakamura Y."/>
            <person name="Sato S."/>
            <person name="Kato T."/>
            <person name="Asamizu E."/>
            <person name="Sasamoto S."/>
            <person name="Kimura T."/>
            <person name="Idesawa K."/>
            <person name="Kawashima K."/>
            <person name="Kishida Y."/>
            <person name="Kiyokawa C."/>
            <person name="Kohara M."/>
            <person name="Matsumoto M."/>
            <person name="Matsuno A."/>
            <person name="Muraki A."/>
            <person name="Nakayama S."/>
            <person name="Nakazaki N."/>
            <person name="Shinpo S."/>
            <person name="Takeuchi C."/>
            <person name="Wada T."/>
            <person name="Watanabe A."/>
            <person name="Yamada M."/>
            <person name="Yasuda M."/>
            <person name="Tabata S."/>
        </authorList>
    </citation>
    <scope>NUCLEOTIDE SEQUENCE [LARGE SCALE GENOMIC DNA]</scope>
    <source>
        <strain>cv. Columbia</strain>
    </source>
</reference>
<reference key="2">
    <citation type="journal article" date="2017" name="Plant J.">
        <title>Araport11: a complete reannotation of the Arabidopsis thaliana reference genome.</title>
        <authorList>
            <person name="Cheng C.Y."/>
            <person name="Krishnakumar V."/>
            <person name="Chan A.P."/>
            <person name="Thibaud-Nissen F."/>
            <person name="Schobel S."/>
            <person name="Town C.D."/>
        </authorList>
    </citation>
    <scope>GENOME REANNOTATION</scope>
    <source>
        <strain>cv. Columbia</strain>
    </source>
</reference>
<reference key="3">
    <citation type="submission" date="2005-05" db="EMBL/GenBank/DDBJ databases">
        <authorList>
            <person name="Underwood B.A."/>
            <person name="Xiao Y.-L."/>
            <person name="Moskal W.A. Jr."/>
            <person name="Monaghan E.L."/>
            <person name="Wang W."/>
            <person name="Redman J.C."/>
            <person name="Wu H.C."/>
            <person name="Utterback T."/>
            <person name="Town C.D."/>
        </authorList>
    </citation>
    <scope>NUCLEOTIDE SEQUENCE [LARGE SCALE MRNA]</scope>
    <source>
        <strain>cv. Columbia</strain>
    </source>
</reference>
<reference key="4">
    <citation type="journal article" date="2008" name="BMC Genomics">
        <title>LEA (late embryogenesis abundant) proteins and their encoding genes in Arabidopsis thaliana.</title>
        <authorList>
            <person name="Hundertmark M."/>
            <person name="Hincha D.K."/>
        </authorList>
    </citation>
    <scope>GENE FAMILY</scope>
</reference>
<reference key="5">
    <citation type="journal article" date="2014" name="Plant Cell">
        <title>The ubiquitous distribution of late embryogenesis abundant proteins across cell compartments in Arabidopsis offers tailored protection against abiotic stress.</title>
        <authorList>
            <person name="Candat A."/>
            <person name="Paszkiewicz G."/>
            <person name="Neveu M."/>
            <person name="Gautier R."/>
            <person name="Logan D.C."/>
            <person name="Avelange-Macherel M.-H."/>
            <person name="Macherel D."/>
        </authorList>
    </citation>
    <scope>SUBCELLULAR LOCATION</scope>
    <scope>GENE FAMILY</scope>
    <scope>NOMENCLATURE</scope>
</reference>
<sequence>MSQSLFNLKSLSRSINNTIRMRRYIVITKASQRAYTIGSSQEKPSWASDPDTGYFRPETAAKELDPYIAKTSQVQGKMMRGEELWWMPDPQTGYYRPDNFARELDAVELRSLHFNKNQKTYVVS</sequence>
<keyword id="KW-0025">Alternative splicing</keyword>
<keyword id="KW-0496">Mitochondrion</keyword>
<keyword id="KW-1185">Reference proteome</keyword>
<keyword id="KW-0809">Transit peptide</keyword>
<proteinExistence type="evidence at transcript level"/>
<name>LEA37_ARATH</name>
<comment type="subcellular location">
    <subcellularLocation>
        <location evidence="2">Mitochondrion</location>
    </subcellularLocation>
</comment>
<comment type="alternative products">
    <event type="alternative splicing"/>
    <isoform>
        <id>Q9M349-1</id>
        <name>1</name>
        <sequence type="displayed"/>
    </isoform>
    <isoform>
        <id>Q9M349-2</id>
        <name>2</name>
        <sequence type="described" ref="VSP_058915"/>
    </isoform>
</comment>
<comment type="similarity">
    <text evidence="4">Belongs to the LEA type 3 family.</text>
</comment>
<feature type="transit peptide" description="Mitochondrion" evidence="1">
    <location>
        <begin position="1"/>
        <end position="35"/>
    </location>
</feature>
<feature type="chain" id="PRO_0000439764" description="Late embryogenesis abundant protein 37">
    <location>
        <begin position="36"/>
        <end position="124"/>
    </location>
</feature>
<feature type="splice variant" id="VSP_058915" description="In isoform 2.">
    <original>YVVS</original>
    <variation>ENS</variation>
    <location>
        <begin position="121"/>
        <end position="124"/>
    </location>
</feature>
<protein>
    <recommendedName>
        <fullName evidence="3">Late embryogenesis abundant protein 37</fullName>
    </recommendedName>
</protein>
<accession>Q9M349</accession>
<accession>F4JBM2</accession>
<gene>
    <name evidence="3" type="primary">LEA37</name>
    <name evidence="5" type="ordered locus">At3g53770</name>
    <name evidence="6" type="ORF">F5K20.70</name>
</gene>